<keyword id="KW-0007">Acetylation</keyword>
<keyword id="KW-0025">Alternative splicing</keyword>
<keyword id="KW-0406">Ion transport</keyword>
<keyword id="KW-1017">Isopeptide bond</keyword>
<keyword id="KW-0472">Membrane</keyword>
<keyword id="KW-0496">Mitochondrion</keyword>
<keyword id="KW-1000">Mitochondrion outer membrane</keyword>
<keyword id="KW-0520">NAD</keyword>
<keyword id="KW-0547">Nucleotide-binding</keyword>
<keyword id="KW-0597">Phosphoprotein</keyword>
<keyword id="KW-0626">Porin</keyword>
<keyword id="KW-1267">Proteomics identification</keyword>
<keyword id="KW-1185">Reference proteome</keyword>
<keyword id="KW-0812">Transmembrane</keyword>
<keyword id="KW-1134">Transmembrane beta strand</keyword>
<keyword id="KW-0813">Transport</keyword>
<keyword id="KW-0832">Ubl conjugation</keyword>
<reference key="1">
    <citation type="journal article" date="1998" name="Eur. J. Hum. Genet.">
        <title>Isolation of a novel human voltage-dependent anion channel gene.</title>
        <authorList>
            <person name="Rahmani Z."/>
            <person name="Maunoury C."/>
            <person name="Siddiqui A."/>
        </authorList>
    </citation>
    <scope>NUCLEOTIDE SEQUENCE [MRNA]</scope>
    <scope>TISSUE SPECIFICITY</scope>
</reference>
<reference key="2">
    <citation type="journal article" date="1998" name="Proc. Natl. Acad. Sci. U.S.A.">
        <title>Identification of genes expressed in human CD34(+) hematopoietic stem/progenitor cells by expressed sequence tags and efficient full-length cDNA cloning.</title>
        <authorList>
            <person name="Mao M."/>
            <person name="Fu G."/>
            <person name="Wu J.-S."/>
            <person name="Zhang Q.-H."/>
            <person name="Zhou J."/>
            <person name="Kan L.-X."/>
            <person name="Huang Q.-H."/>
            <person name="He K.-L."/>
            <person name="Gu B.-W."/>
            <person name="Han Z.-G."/>
            <person name="Shen Y."/>
            <person name="Gu J."/>
            <person name="Yu Y.-P."/>
            <person name="Xu S.-H."/>
            <person name="Wang Y.-X."/>
            <person name="Chen S.-J."/>
            <person name="Chen Z."/>
        </authorList>
    </citation>
    <scope>NUCLEOTIDE SEQUENCE [LARGE SCALE MRNA]</scope>
    <source>
        <tissue>Umbilical cord blood</tissue>
    </source>
</reference>
<reference key="3">
    <citation type="journal article" date="2004" name="Genome Res.">
        <title>The status, quality, and expansion of the NIH full-length cDNA project: the Mammalian Gene Collection (MGC).</title>
        <authorList>
            <consortium name="The MGC Project Team"/>
        </authorList>
    </citation>
    <scope>NUCLEOTIDE SEQUENCE [LARGE SCALE MRNA] (ISOFORM 1)</scope>
    <source>
        <tissue>Skin</tissue>
    </source>
</reference>
<reference key="4">
    <citation type="journal article" date="1999" name="Mamm. Genome">
        <title>Revised fine mapping of the human voltage-dependent anion channel loci by radiation hybrid analysis.</title>
        <authorList>
            <person name="Decker W.K."/>
            <person name="Bowles K.R."/>
            <person name="Schatte E.C."/>
            <person name="Towbin J.A."/>
            <person name="Craigen W.J."/>
        </authorList>
    </citation>
    <scope>NUCLEOTIDE SEQUENCE [GENOMIC DNA] OF 1-253</scope>
</reference>
<reference key="5">
    <citation type="journal article" date="2000" name="Mol. Genet. Metab.">
        <title>The tissue-specific, alternatively spliced single ATG exon of the type 3 voltage-dependent anion channel gene does not create a truncated protein isoform in vivo.</title>
        <authorList>
            <person name="Decker W.K."/>
            <person name="Craigen W.J."/>
        </authorList>
    </citation>
    <scope>ALTERNATIVE SPLICING</scope>
</reference>
<reference key="6">
    <citation type="journal article" date="2009" name="Anal. Chem.">
        <title>Lys-N and trypsin cover complementary parts of the phosphoproteome in a refined SCX-based approach.</title>
        <authorList>
            <person name="Gauci S."/>
            <person name="Helbig A.O."/>
            <person name="Slijper M."/>
            <person name="Krijgsveld J."/>
            <person name="Heck A.J."/>
            <person name="Mohammed S."/>
        </authorList>
    </citation>
    <scope>ACETYLATION [LARGE SCALE ANALYSIS] AT CYS-2</scope>
    <scope>CLEAVAGE OF INITIATOR METHIONINE [LARGE SCALE ANALYSIS]</scope>
    <scope>IDENTIFICATION BY MASS SPECTROMETRY [LARGE SCALE ANALYSIS]</scope>
</reference>
<reference key="7">
    <citation type="journal article" date="2009" name="Science">
        <title>Lysine acetylation targets protein complexes and co-regulates major cellular functions.</title>
        <authorList>
            <person name="Choudhary C."/>
            <person name="Kumar C."/>
            <person name="Gnad F."/>
            <person name="Nielsen M.L."/>
            <person name="Rehman M."/>
            <person name="Walther T.C."/>
            <person name="Olsen J.V."/>
            <person name="Mann M."/>
        </authorList>
    </citation>
    <scope>ACETYLATION [LARGE SCALE ANALYSIS] AT LYS-20 AND LYS-90</scope>
    <scope>IDENTIFICATION BY MASS SPECTROMETRY [LARGE SCALE ANALYSIS]</scope>
</reference>
<reference key="8">
    <citation type="journal article" date="2011" name="BMC Syst. Biol.">
        <title>Initial characterization of the human central proteome.</title>
        <authorList>
            <person name="Burkard T.R."/>
            <person name="Planyavsky M."/>
            <person name="Kaupe I."/>
            <person name="Breitwieser F.P."/>
            <person name="Buerckstuemmer T."/>
            <person name="Bennett K.L."/>
            <person name="Superti-Furga G."/>
            <person name="Colinge J."/>
        </authorList>
    </citation>
    <scope>IDENTIFICATION BY MASS SPECTROMETRY [LARGE SCALE ANALYSIS]</scope>
</reference>
<reference key="9">
    <citation type="journal article" date="2013" name="J. Proteome Res.">
        <title>Toward a comprehensive characterization of a human cancer cell phosphoproteome.</title>
        <authorList>
            <person name="Zhou H."/>
            <person name="Di Palma S."/>
            <person name="Preisinger C."/>
            <person name="Peng M."/>
            <person name="Polat A.N."/>
            <person name="Heck A.J."/>
            <person name="Mohammed S."/>
        </authorList>
    </citation>
    <scope>PHOSPHORYLATION [LARGE SCALE ANALYSIS] AT THR-4</scope>
    <scope>IDENTIFICATION BY MASS SPECTROMETRY [LARGE SCALE ANALYSIS]</scope>
    <source>
        <tissue>Cervix carcinoma</tissue>
        <tissue>Erythroleukemia</tissue>
    </source>
</reference>
<reference key="10">
    <citation type="journal article" date="2015" name="Nat. Cell Biol.">
        <title>USP30 and parkin homeostatically regulate atypical ubiquitin chains on mitochondria.</title>
        <authorList>
            <person name="Cunningham C.N."/>
            <person name="Baughman J.M."/>
            <person name="Phu L."/>
            <person name="Tea J.S."/>
            <person name="Yu C."/>
            <person name="Coons M."/>
            <person name="Kirkpatrick D.S."/>
            <person name="Bingol B."/>
            <person name="Corn J.E."/>
        </authorList>
    </citation>
    <scope>UBIQUITINATION AT LYS-53; LYS-61; LYS-109; LYS-110; LYS-163; LYS-266 AND LYS-274</scope>
</reference>
<reference key="11">
    <citation type="journal article" date="2015" name="Proteomics">
        <title>N-terminome analysis of the human mitochondrial proteome.</title>
        <authorList>
            <person name="Vaca Jacome A.S."/>
            <person name="Rabilloud T."/>
            <person name="Schaeffer-Reiss C."/>
            <person name="Rompais M."/>
            <person name="Ayoub D."/>
            <person name="Lane L."/>
            <person name="Bairoch A."/>
            <person name="Van Dorsselaer A."/>
            <person name="Carapito C."/>
        </authorList>
    </citation>
    <scope>ACETYLATION [LARGE SCALE ANALYSIS] AT CYS-2</scope>
    <scope>CLEAVAGE OF INITIATOR METHIONINE [LARGE SCALE ANALYSIS]</scope>
    <scope>IDENTIFICATION BY MASS SPECTROMETRY [LARGE SCALE ANALYSIS]</scope>
</reference>
<reference key="12">
    <citation type="journal article" date="2016" name="Sci. Rep.">
        <title>TSPO ligands stimulate ZnPPIX transport and ROS accumulation leading to the inhibition of P. falciparum growth in human blood.</title>
        <authorList>
            <person name="Marginedas-Freixa I."/>
            <person name="Hattab C."/>
            <person name="Bouyer G."/>
            <person name="Halle F."/>
            <person name="Chene A."/>
            <person name="Lefevre S.D."/>
            <person name="Cambot M."/>
            <person name="Cueff A."/>
            <person name="Schmitt M."/>
            <person name="Gamain B."/>
            <person name="Lacapere J.J."/>
            <person name="Egee S."/>
            <person name="Bihel F."/>
            <person name="Le Van Kim C."/>
            <person name="Ostuni M.A."/>
        </authorList>
    </citation>
    <scope>SUBCELLULAR LOCATION</scope>
    <scope>TISSUE SPECIFICITY</scope>
    <scope>IDENTIFICATION BY MASS SPECTROMETRY</scope>
</reference>
<reference key="13">
    <citation type="journal article" date="2020" name="J. Gen. Physiol.">
        <title>A lower affinity to cytosolic proteins reveals VDAC3 isoform-specific role in mitochondrial biology.</title>
        <authorList>
            <person name="Queralt-Martin M."/>
            <person name="Bergdoll L."/>
            <person name="Teijido O."/>
            <person name="Munshi N."/>
            <person name="Jacobs D."/>
            <person name="Kuszak A.J."/>
            <person name="Protchenko O."/>
            <person name="Reina S."/>
            <person name="Magri A."/>
            <person name="De Pinto V."/>
            <person name="Bezrukov S.M."/>
            <person name="Abramson J."/>
            <person name="Rostovtseva T.K."/>
        </authorList>
    </citation>
    <scope>FUNCTION</scope>
    <scope>TRANSPORTER ACTIVITY</scope>
</reference>
<evidence type="ECO:0000250" key="1">
    <source>
        <dbReference type="UniProtKB" id="P21796"/>
    </source>
</evidence>
<evidence type="ECO:0000250" key="2">
    <source>
        <dbReference type="UniProtKB" id="Q60931"/>
    </source>
</evidence>
<evidence type="ECO:0000250" key="3">
    <source>
        <dbReference type="UniProtKB" id="Q9R1Z0"/>
    </source>
</evidence>
<evidence type="ECO:0000269" key="4">
    <source>
    </source>
</evidence>
<evidence type="ECO:0000269" key="5">
    <source>
    </source>
</evidence>
<evidence type="ECO:0000269" key="6">
    <source>
    </source>
</evidence>
<evidence type="ECO:0000269" key="7">
    <source>
    </source>
</evidence>
<evidence type="ECO:0000303" key="8">
    <source>
    </source>
</evidence>
<evidence type="ECO:0000305" key="9"/>
<evidence type="ECO:0000312" key="10">
    <source>
        <dbReference type="HGNC" id="HGNC:12674"/>
    </source>
</evidence>
<evidence type="ECO:0007744" key="11">
    <source>
    </source>
</evidence>
<evidence type="ECO:0007744" key="12">
    <source>
    </source>
</evidence>
<evidence type="ECO:0007744" key="13">
    <source>
    </source>
</evidence>
<evidence type="ECO:0007744" key="14">
    <source>
    </source>
</evidence>
<accession>Q9Y277</accession>
<accession>Q9UIS0</accession>
<sequence>MCNTPTYCDLGKAAKDVFNKGYGFGMVKIDLKTKSCSGVEFSTSGHAYTDTGKASGNLETKYKVCNYGLTFTQKWNTDNTLGTEISWENKLAEGLKLTLDTIFVPNTGKKSGKLKASYKRDCFSVGSNVDIDFSGPTIYGWAVLAFEGWLAGYQMSFDTAKSKLSQNNFALGYKAADFQLHTHVNDGTEFGGSIYQKVNEKIETSINLAWTAGSNNTRFGIAAKYMLDCRTSLSAKVNNASLIGLGYTQTLRPGVKLTLSALIDGKNFSAGGHKVGLGFELEA</sequence>
<dbReference type="EMBL" id="U90943">
    <property type="protein sequence ID" value="AAB93872.1"/>
    <property type="molecule type" value="mRNA"/>
</dbReference>
<dbReference type="EMBL" id="AF038962">
    <property type="protein sequence ID" value="AAC39876.1"/>
    <property type="molecule type" value="mRNA"/>
</dbReference>
<dbReference type="EMBL" id="BC056870">
    <property type="protein sequence ID" value="AAH56870.1"/>
    <property type="molecule type" value="mRNA"/>
</dbReference>
<dbReference type="EMBL" id="AH008073">
    <property type="protein sequence ID" value="AAD49610.1"/>
    <property type="molecule type" value="Genomic_DNA"/>
</dbReference>
<dbReference type="CCDS" id="CCDS47850.1">
    <molecule id="Q9Y277-2"/>
</dbReference>
<dbReference type="CCDS" id="CCDS6131.1">
    <molecule id="Q9Y277-1"/>
</dbReference>
<dbReference type="RefSeq" id="NP_001129166.1">
    <molecule id="Q9Y277-2"/>
    <property type="nucleotide sequence ID" value="NM_001135694.3"/>
</dbReference>
<dbReference type="RefSeq" id="NP_001400481.1">
    <molecule id="Q9Y277-1"/>
    <property type="nucleotide sequence ID" value="NM_001413552.1"/>
</dbReference>
<dbReference type="RefSeq" id="NP_001400487.1">
    <molecule id="Q9Y277-1"/>
    <property type="nucleotide sequence ID" value="NM_001413558.1"/>
</dbReference>
<dbReference type="RefSeq" id="NP_005653.3">
    <molecule id="Q9Y277-1"/>
    <property type="nucleotide sequence ID" value="NM_005662.6"/>
</dbReference>
<dbReference type="SMR" id="Q9Y277"/>
<dbReference type="BioGRID" id="113262">
    <property type="interactions" value="353"/>
</dbReference>
<dbReference type="FunCoup" id="Q9Y277">
    <property type="interactions" value="2949"/>
</dbReference>
<dbReference type="IntAct" id="Q9Y277">
    <property type="interactions" value="86"/>
</dbReference>
<dbReference type="MINT" id="Q9Y277"/>
<dbReference type="STRING" id="9606.ENSP00000428845"/>
<dbReference type="ChEMBL" id="CHEMBL4523505"/>
<dbReference type="DrugBank" id="DB01375">
    <property type="generic name" value="Aluminium monostearate"/>
</dbReference>
<dbReference type="DrugBank" id="DB06098">
    <property type="generic name" value="PRLX 93936"/>
</dbReference>
<dbReference type="GlyGen" id="Q9Y277">
    <property type="glycosylation" value="2 sites, 1 N-linked glycan (1 site), 1 O-linked glycan (1 site)"/>
</dbReference>
<dbReference type="iPTMnet" id="Q9Y277"/>
<dbReference type="PhosphoSitePlus" id="Q9Y277"/>
<dbReference type="SwissPalm" id="Q9Y277"/>
<dbReference type="BioMuta" id="VDAC3"/>
<dbReference type="DMDM" id="12643945"/>
<dbReference type="CPTAC" id="CPTAC-448"/>
<dbReference type="CPTAC" id="CPTAC-449"/>
<dbReference type="jPOST" id="Q9Y277"/>
<dbReference type="MassIVE" id="Q9Y277"/>
<dbReference type="PaxDb" id="9606-ENSP00000428845"/>
<dbReference type="PeptideAtlas" id="Q9Y277"/>
<dbReference type="ProteomicsDB" id="85680">
    <molecule id="Q9Y277-1"/>
</dbReference>
<dbReference type="ProteomicsDB" id="85681">
    <molecule id="Q9Y277-2"/>
</dbReference>
<dbReference type="Pumba" id="Q9Y277"/>
<dbReference type="Antibodypedia" id="11458">
    <property type="antibodies" value="219 antibodies from 29 providers"/>
</dbReference>
<dbReference type="DNASU" id="7419"/>
<dbReference type="Ensembl" id="ENST00000022615.9">
    <molecule id="Q9Y277-1"/>
    <property type="protein sequence ID" value="ENSP00000022615.4"/>
    <property type="gene ID" value="ENSG00000078668.14"/>
</dbReference>
<dbReference type="Ensembl" id="ENST00000521158.5">
    <molecule id="Q9Y277-2"/>
    <property type="protein sequence ID" value="ENSP00000428845.1"/>
    <property type="gene ID" value="ENSG00000078668.14"/>
</dbReference>
<dbReference type="GeneID" id="7419"/>
<dbReference type="KEGG" id="hsa:7419"/>
<dbReference type="MANE-Select" id="ENST00000022615.9">
    <property type="protein sequence ID" value="ENSP00000022615.4"/>
    <property type="RefSeq nucleotide sequence ID" value="NM_005662.7"/>
    <property type="RefSeq protein sequence ID" value="NP_005653.3"/>
</dbReference>
<dbReference type="UCSC" id="uc003xpc.4">
    <molecule id="Q9Y277-1"/>
    <property type="organism name" value="human"/>
</dbReference>
<dbReference type="AGR" id="HGNC:12674"/>
<dbReference type="CTD" id="7419"/>
<dbReference type="DisGeNET" id="7419"/>
<dbReference type="GeneCards" id="VDAC3"/>
<dbReference type="HGNC" id="HGNC:12674">
    <property type="gene designation" value="VDAC3"/>
</dbReference>
<dbReference type="HPA" id="ENSG00000078668">
    <property type="expression patterns" value="Group enriched (heart muscle, skeletal muscle, tongue)"/>
</dbReference>
<dbReference type="MIM" id="610029">
    <property type="type" value="gene"/>
</dbReference>
<dbReference type="neXtProt" id="NX_Q9Y277"/>
<dbReference type="OpenTargets" id="ENSG00000078668"/>
<dbReference type="PharmGKB" id="PA37297"/>
<dbReference type="VEuPathDB" id="HostDB:ENSG00000078668"/>
<dbReference type="eggNOG" id="KOG3126">
    <property type="taxonomic scope" value="Eukaryota"/>
</dbReference>
<dbReference type="GeneTree" id="ENSGT00950000182869"/>
<dbReference type="HOGENOM" id="CLU_044399_2_0_1"/>
<dbReference type="InParanoid" id="Q9Y277"/>
<dbReference type="OMA" id="MAPPCYA"/>
<dbReference type="OrthoDB" id="7827681at2759"/>
<dbReference type="PAN-GO" id="Q9Y277">
    <property type="GO annotations" value="2 GO annotations based on evolutionary models"/>
</dbReference>
<dbReference type="PhylomeDB" id="Q9Y277"/>
<dbReference type="TreeFam" id="TF315091"/>
<dbReference type="PathwayCommons" id="Q9Y277"/>
<dbReference type="Reactome" id="R-HSA-5205685">
    <property type="pathway name" value="PINK1-PRKN Mediated Mitophagy"/>
</dbReference>
<dbReference type="Reactome" id="R-HSA-5689880">
    <property type="pathway name" value="Ub-specific processing proteases"/>
</dbReference>
<dbReference type="Reactome" id="R-HSA-8949215">
    <property type="pathway name" value="Mitochondrial calcium ion transport"/>
</dbReference>
<dbReference type="SignaLink" id="Q9Y277"/>
<dbReference type="BioGRID-ORCS" id="7419">
    <property type="hits" value="37 hits in 1162 CRISPR screens"/>
</dbReference>
<dbReference type="CD-CODE" id="8C2F96ED">
    <property type="entry name" value="Centrosome"/>
</dbReference>
<dbReference type="CD-CODE" id="91857CE7">
    <property type="entry name" value="Nucleolus"/>
</dbReference>
<dbReference type="CD-CODE" id="FB4E32DD">
    <property type="entry name" value="Presynaptic clusters and postsynaptic densities"/>
</dbReference>
<dbReference type="ChiTaRS" id="VDAC3">
    <property type="organism name" value="human"/>
</dbReference>
<dbReference type="GeneWiki" id="VDAC3"/>
<dbReference type="GenomeRNAi" id="7419"/>
<dbReference type="Pharos" id="Q9Y277">
    <property type="development level" value="Tbio"/>
</dbReference>
<dbReference type="PRO" id="PR:Q9Y277"/>
<dbReference type="Proteomes" id="UP000005640">
    <property type="component" value="Chromosome 8"/>
</dbReference>
<dbReference type="RNAct" id="Q9Y277">
    <property type="molecule type" value="protein"/>
</dbReference>
<dbReference type="Bgee" id="ENSG00000078668">
    <property type="expression patterns" value="Expressed in Brodmann (1909) area 23 and 215 other cell types or tissues"/>
</dbReference>
<dbReference type="ExpressionAtlas" id="Q9Y277">
    <property type="expression patterns" value="baseline and differential"/>
</dbReference>
<dbReference type="GO" id="GO:0070062">
    <property type="term" value="C:extracellular exosome"/>
    <property type="evidence" value="ECO:0007005"/>
    <property type="project" value="UniProtKB"/>
</dbReference>
<dbReference type="GO" id="GO:0016020">
    <property type="term" value="C:membrane"/>
    <property type="evidence" value="ECO:0000314"/>
    <property type="project" value="UniProtKB"/>
</dbReference>
<dbReference type="GO" id="GO:0005741">
    <property type="term" value="C:mitochondrial outer membrane"/>
    <property type="evidence" value="ECO:0000318"/>
    <property type="project" value="GO_Central"/>
</dbReference>
<dbReference type="GO" id="GO:0005739">
    <property type="term" value="C:mitochondrion"/>
    <property type="evidence" value="ECO:0000314"/>
    <property type="project" value="HPA"/>
</dbReference>
<dbReference type="GO" id="GO:0005634">
    <property type="term" value="C:nucleus"/>
    <property type="evidence" value="ECO:0007005"/>
    <property type="project" value="UniProtKB"/>
</dbReference>
<dbReference type="GO" id="GO:0046930">
    <property type="term" value="C:pore complex"/>
    <property type="evidence" value="ECO:0007669"/>
    <property type="project" value="UniProtKB-KW"/>
</dbReference>
<dbReference type="GO" id="GO:0045202">
    <property type="term" value="C:synapse"/>
    <property type="evidence" value="ECO:0007669"/>
    <property type="project" value="GOC"/>
</dbReference>
<dbReference type="GO" id="GO:0000166">
    <property type="term" value="F:nucleotide binding"/>
    <property type="evidence" value="ECO:0007669"/>
    <property type="project" value="UniProtKB-KW"/>
</dbReference>
<dbReference type="GO" id="GO:0015288">
    <property type="term" value="F:porin activity"/>
    <property type="evidence" value="ECO:0007669"/>
    <property type="project" value="UniProtKB-KW"/>
</dbReference>
<dbReference type="GO" id="GO:0008308">
    <property type="term" value="F:voltage-gated monoatomic anion channel activity"/>
    <property type="evidence" value="ECO:0000318"/>
    <property type="project" value="GO_Central"/>
</dbReference>
<dbReference type="GO" id="GO:0005244">
    <property type="term" value="F:voltage-gated monoatomic ion channel activity"/>
    <property type="evidence" value="ECO:0000314"/>
    <property type="project" value="UniProtKB"/>
</dbReference>
<dbReference type="GO" id="GO:0015853">
    <property type="term" value="P:adenine transport"/>
    <property type="evidence" value="ECO:0000304"/>
    <property type="project" value="ProtInc"/>
</dbReference>
<dbReference type="GO" id="GO:0001662">
    <property type="term" value="P:behavioral fear response"/>
    <property type="evidence" value="ECO:0007669"/>
    <property type="project" value="Ensembl"/>
</dbReference>
<dbReference type="GO" id="GO:0007612">
    <property type="term" value="P:learning"/>
    <property type="evidence" value="ECO:0007669"/>
    <property type="project" value="Ensembl"/>
</dbReference>
<dbReference type="GO" id="GO:0007270">
    <property type="term" value="P:neuron-neuron synaptic transmission"/>
    <property type="evidence" value="ECO:0007669"/>
    <property type="project" value="Ensembl"/>
</dbReference>
<dbReference type="GO" id="GO:0120317">
    <property type="term" value="P:sperm mitochondrial sheath assembly"/>
    <property type="evidence" value="ECO:0000250"/>
    <property type="project" value="UniProtKB"/>
</dbReference>
<dbReference type="GO" id="GO:0007283">
    <property type="term" value="P:spermatogenesis"/>
    <property type="evidence" value="ECO:0000250"/>
    <property type="project" value="UniProtKB"/>
</dbReference>
<dbReference type="CDD" id="cd07306">
    <property type="entry name" value="Porin3_VDAC"/>
    <property type="match status" value="1"/>
</dbReference>
<dbReference type="FunFam" id="2.40.160.10:FF:000001">
    <property type="entry name" value="Voltage-dependent anion-selective channel protein 2"/>
    <property type="match status" value="1"/>
</dbReference>
<dbReference type="Gene3D" id="2.40.160.10">
    <property type="entry name" value="Porin"/>
    <property type="match status" value="1"/>
</dbReference>
<dbReference type="InterPro" id="IPR023614">
    <property type="entry name" value="Porin_dom_sf"/>
</dbReference>
<dbReference type="InterPro" id="IPR001925">
    <property type="entry name" value="Porin_Euk"/>
</dbReference>
<dbReference type="InterPro" id="IPR027246">
    <property type="entry name" value="Porin_Euk/Tom40"/>
</dbReference>
<dbReference type="PANTHER" id="PTHR11743">
    <property type="entry name" value="VOLTAGE-DEPENDENT ANION-SELECTIVE CHANNEL"/>
    <property type="match status" value="1"/>
</dbReference>
<dbReference type="PANTHER" id="PTHR11743:SF28">
    <property type="entry name" value="VOLTAGE-DEPENDENT ANION-SELECTIVE CHANNEL PROTEIN 3"/>
    <property type="match status" value="1"/>
</dbReference>
<dbReference type="Pfam" id="PF01459">
    <property type="entry name" value="Porin_3"/>
    <property type="match status" value="1"/>
</dbReference>
<dbReference type="PRINTS" id="PR00185">
    <property type="entry name" value="EUKARYTPORIN"/>
</dbReference>
<dbReference type="PROSITE" id="PS00558">
    <property type="entry name" value="EUKARYOTIC_PORIN"/>
    <property type="match status" value="1"/>
</dbReference>
<gene>
    <name evidence="10" type="primary">VDAC3</name>
</gene>
<comment type="function">
    <text evidence="2 6">Non-selective voltage-gated ion channel that mediates the transport of anions and cations through the mitochondrion outer membrane and plasma membrane (PubMed:31935282). Forms a high-conducting channel with a stable open state and a voltage-induced closure with a mild preference for anions over cations (PubMed:31935282). Involved in male fertility and sperm mitochondrial sheath formation (By similarity).</text>
</comment>
<comment type="catalytic activity">
    <reaction evidence="6">
        <text>chloride(in) = chloride(out)</text>
        <dbReference type="Rhea" id="RHEA:29823"/>
        <dbReference type="ChEBI" id="CHEBI:17996"/>
    </reaction>
</comment>
<comment type="catalytic activity">
    <reaction evidence="6">
        <text>K(+)(in) = K(+)(out)</text>
        <dbReference type="Rhea" id="RHEA:29463"/>
        <dbReference type="ChEBI" id="CHEBI:29103"/>
    </reaction>
</comment>
<comment type="subunit">
    <text evidence="2">Interacts with ARMC12 in a TBC1D21-dependent manner (By similarity). Interacts with MISFA (By similarity).</text>
</comment>
<comment type="interaction">
    <interactant intactId="EBI-354196">
        <id>Q9Y277</id>
    </interactant>
    <interactant intactId="EBI-354158">
        <id>P21796</id>
        <label>VDAC1</label>
    </interactant>
    <organismsDiffer>false</organismsDiffer>
    <experiments>4</experiments>
</comment>
<comment type="interaction">
    <interactant intactId="EBI-354196">
        <id>Q9Y277</id>
    </interactant>
    <interactant intactId="EBI-354022">
        <id>P45880</id>
        <label>VDAC2</label>
    </interactant>
    <organismsDiffer>false</organismsDiffer>
    <experiments>2</experiments>
</comment>
<comment type="subcellular location">
    <subcellularLocation>
        <location evidence="1">Mitochondrion outer membrane</location>
    </subcellularLocation>
    <subcellularLocation>
        <location evidence="5">Membrane</location>
    </subcellularLocation>
    <text evidence="5">May localize to non-mitochondrial membranes.</text>
</comment>
<comment type="alternative products">
    <event type="alternative splicing"/>
    <isoform>
        <id>Q9Y277-1</id>
        <name>1</name>
        <sequence type="displayed"/>
    </isoform>
    <isoform>
        <id>Q9Y277-2</id>
        <name>2</name>
        <sequence type="described" ref="VSP_005079"/>
    </isoform>
</comment>
<comment type="tissue specificity">
    <text evidence="5 7">Expressed in erythrocytes (at protein level) (PubMed:27641616). Widely expressed. Highest in testis (PubMed:9781040).</text>
</comment>
<comment type="domain">
    <text evidence="1">Consists mainly of a membrane-spanning beta-barrel formed by 19 beta-strands.</text>
</comment>
<comment type="PTM">
    <text evidence="4">Ubiquitinated by PRKN during mitophagy, leading to its degradation and enhancement of mitophagy. Deubiquitinated by USP30.</text>
</comment>
<comment type="similarity">
    <text evidence="9">Belongs to the eukaryotic mitochondrial porin family.</text>
</comment>
<protein>
    <recommendedName>
        <fullName evidence="9">Non-selective voltage-gated ion channel VDAC3</fullName>
        <shortName>VDAC-3</shortName>
        <shortName evidence="8">hVDAC3</shortName>
    </recommendedName>
    <alternativeName>
        <fullName>Outer mitochondrial membrane protein porin 3</fullName>
    </alternativeName>
</protein>
<feature type="initiator methionine" description="Removed" evidence="11 14">
    <location>
        <position position="1"/>
    </location>
</feature>
<feature type="chain" id="PRO_0000050512" description="Non-selective voltage-gated ion channel VDAC3">
    <location>
        <begin position="2"/>
        <end position="283"/>
    </location>
</feature>
<feature type="transmembrane region" description="Beta stranded" evidence="1">
    <location>
        <begin position="26"/>
        <end position="35"/>
    </location>
</feature>
<feature type="transmembrane region" description="Beta stranded" evidence="1">
    <location>
        <begin position="39"/>
        <end position="47"/>
    </location>
</feature>
<feature type="transmembrane region" description="Beta stranded" evidence="1">
    <location>
        <begin position="54"/>
        <end position="64"/>
    </location>
</feature>
<feature type="transmembrane region" description="Beta stranded" evidence="1">
    <location>
        <begin position="69"/>
        <end position="76"/>
    </location>
</feature>
<feature type="transmembrane region" description="Beta stranded" evidence="1">
    <location>
        <begin position="80"/>
        <end position="89"/>
    </location>
</feature>
<feature type="transmembrane region" description="Beta stranded" evidence="1">
    <location>
        <begin position="95"/>
        <end position="104"/>
    </location>
</feature>
<feature type="transmembrane region" description="Beta stranded" evidence="1">
    <location>
        <begin position="111"/>
        <end position="120"/>
    </location>
</feature>
<feature type="transmembrane region" description="Beta stranded" evidence="1">
    <location>
        <begin position="123"/>
        <end position="130"/>
    </location>
</feature>
<feature type="transmembrane region" description="Beta stranded" evidence="1">
    <location>
        <begin position="137"/>
        <end position="145"/>
    </location>
</feature>
<feature type="transmembrane region" description="Beta stranded" evidence="1">
    <location>
        <begin position="150"/>
        <end position="158"/>
    </location>
</feature>
<feature type="transmembrane region" description="Beta stranded" evidence="1">
    <location>
        <begin position="163"/>
        <end position="175"/>
    </location>
</feature>
<feature type="transmembrane region" description="Beta stranded" evidence="1">
    <location>
        <begin position="178"/>
        <end position="185"/>
    </location>
</feature>
<feature type="transmembrane region" description="Beta stranded" evidence="1">
    <location>
        <begin position="189"/>
        <end position="198"/>
    </location>
</feature>
<feature type="transmembrane region" description="Beta stranded" evidence="1">
    <location>
        <begin position="202"/>
        <end position="211"/>
    </location>
</feature>
<feature type="transmembrane region" description="Beta stranded" evidence="1">
    <location>
        <begin position="218"/>
        <end position="227"/>
    </location>
</feature>
<feature type="transmembrane region" description="Beta stranded" evidence="1">
    <location>
        <begin position="231"/>
        <end position="238"/>
    </location>
</feature>
<feature type="transmembrane region" description="Beta stranded" evidence="1">
    <location>
        <begin position="242"/>
        <end position="251"/>
    </location>
</feature>
<feature type="transmembrane region" description="Beta stranded" evidence="1">
    <location>
        <begin position="254"/>
        <end position="263"/>
    </location>
</feature>
<feature type="transmembrane region" description="Beta stranded" evidence="1">
    <location>
        <begin position="273"/>
        <end position="282"/>
    </location>
</feature>
<feature type="binding site" evidence="1">
    <location>
        <begin position="242"/>
        <end position="244"/>
    </location>
    <ligand>
        <name>NAD(+)</name>
        <dbReference type="ChEBI" id="CHEBI:57540"/>
    </ligand>
</feature>
<feature type="binding site" evidence="1">
    <location>
        <begin position="260"/>
        <end position="264"/>
    </location>
    <ligand>
        <name>NAD(+)</name>
        <dbReference type="ChEBI" id="CHEBI:57540"/>
    </ligand>
</feature>
<feature type="modified residue" description="N-acetylcysteine" evidence="11 14">
    <location>
        <position position="2"/>
    </location>
</feature>
<feature type="modified residue" description="Phosphothreonine" evidence="13">
    <location>
        <position position="4"/>
    </location>
</feature>
<feature type="modified residue" description="N6-acetyllysine" evidence="2">
    <location>
        <position position="12"/>
    </location>
</feature>
<feature type="modified residue" description="N6-acetyllysine" evidence="2">
    <location>
        <position position="15"/>
    </location>
</feature>
<feature type="modified residue" description="N6-acetyllysine" evidence="12">
    <location>
        <position position="20"/>
    </location>
</feature>
<feature type="modified residue" description="N6-acetyllysine" evidence="12">
    <location>
        <position position="90"/>
    </location>
</feature>
<feature type="modified residue" description="Phosphoserine" evidence="3">
    <location>
        <position position="241"/>
    </location>
</feature>
<feature type="modified residue" description="N6-acetyllysine; alternate" evidence="2">
    <location>
        <position position="266"/>
    </location>
</feature>
<feature type="cross-link" description="Glycyl lysine isopeptide (Lys-Gly) (interchain with G-Cter in ubiquitin)" evidence="4">
    <location>
        <position position="53"/>
    </location>
</feature>
<feature type="cross-link" description="Glycyl lysine isopeptide (Lys-Gly) (interchain with G-Cter in ubiquitin)" evidence="4">
    <location>
        <position position="61"/>
    </location>
</feature>
<feature type="cross-link" description="Glycyl lysine isopeptide (Lys-Gly) (interchain with G-Cter in ubiquitin)" evidence="4">
    <location>
        <position position="109"/>
    </location>
</feature>
<feature type="cross-link" description="Glycyl lysine isopeptide (Lys-Gly) (interchain with G-Cter in ubiquitin)" evidence="4">
    <location>
        <position position="110"/>
    </location>
</feature>
<feature type="cross-link" description="Glycyl lysine isopeptide (Lys-Gly) (interchain with G-Cter in ubiquitin)" evidence="4">
    <location>
        <position position="163"/>
    </location>
</feature>
<feature type="cross-link" description="Glycyl lysine isopeptide (Lys-Gly) (interchain with G-Cter in ubiquitin); alternate" evidence="4">
    <location>
        <position position="266"/>
    </location>
</feature>
<feature type="cross-link" description="Glycyl lysine isopeptide (Lys-Gly) (interchain with G-Cter in ubiquitin)" evidence="4">
    <location>
        <position position="274"/>
    </location>
</feature>
<feature type="splice variant" id="VSP_005079" description="In isoform 2." evidence="9">
    <original>V</original>
    <variation>VM</variation>
    <location>
        <position position="39"/>
    </location>
</feature>
<organism>
    <name type="scientific">Homo sapiens</name>
    <name type="common">Human</name>
    <dbReference type="NCBI Taxonomy" id="9606"/>
    <lineage>
        <taxon>Eukaryota</taxon>
        <taxon>Metazoa</taxon>
        <taxon>Chordata</taxon>
        <taxon>Craniata</taxon>
        <taxon>Vertebrata</taxon>
        <taxon>Euteleostomi</taxon>
        <taxon>Mammalia</taxon>
        <taxon>Eutheria</taxon>
        <taxon>Euarchontoglires</taxon>
        <taxon>Primates</taxon>
        <taxon>Haplorrhini</taxon>
        <taxon>Catarrhini</taxon>
        <taxon>Hominidae</taxon>
        <taxon>Homo</taxon>
    </lineage>
</organism>
<proteinExistence type="evidence at protein level"/>
<name>VDAC3_HUMAN</name>